<dbReference type="EMBL" id="D10555">
    <property type="protein sequence ID" value="BAA01412.1"/>
    <property type="molecule type" value="Genomic_DNA"/>
</dbReference>
<dbReference type="PIR" id="PQ0337">
    <property type="entry name" value="PQ0337"/>
</dbReference>
<dbReference type="PIR" id="S20592">
    <property type="entry name" value="S20592"/>
</dbReference>
<dbReference type="SMR" id="Q00268"/>
<dbReference type="GO" id="GO:0043626">
    <property type="term" value="C:PCNA complex"/>
    <property type="evidence" value="ECO:0007669"/>
    <property type="project" value="TreeGrafter"/>
</dbReference>
<dbReference type="GO" id="GO:0003677">
    <property type="term" value="F:DNA binding"/>
    <property type="evidence" value="ECO:0007669"/>
    <property type="project" value="UniProtKB-KW"/>
</dbReference>
<dbReference type="GO" id="GO:0030337">
    <property type="term" value="F:DNA polymerase processivity factor activity"/>
    <property type="evidence" value="ECO:0007669"/>
    <property type="project" value="InterPro"/>
</dbReference>
<dbReference type="GO" id="GO:0006272">
    <property type="term" value="P:leading strand elongation"/>
    <property type="evidence" value="ECO:0007669"/>
    <property type="project" value="TreeGrafter"/>
</dbReference>
<dbReference type="GO" id="GO:0006298">
    <property type="term" value="P:mismatch repair"/>
    <property type="evidence" value="ECO:0007669"/>
    <property type="project" value="TreeGrafter"/>
</dbReference>
<dbReference type="GO" id="GO:0006275">
    <property type="term" value="P:regulation of DNA replication"/>
    <property type="evidence" value="ECO:0007669"/>
    <property type="project" value="InterPro"/>
</dbReference>
<dbReference type="GO" id="GO:0019985">
    <property type="term" value="P:translesion synthesis"/>
    <property type="evidence" value="ECO:0007669"/>
    <property type="project" value="TreeGrafter"/>
</dbReference>
<dbReference type="CDD" id="cd00577">
    <property type="entry name" value="PCNA"/>
    <property type="match status" value="1"/>
</dbReference>
<dbReference type="FunFam" id="3.70.10.10:FF:000001">
    <property type="entry name" value="Proliferating cell nuclear antigen"/>
    <property type="match status" value="1"/>
</dbReference>
<dbReference type="Gene3D" id="3.70.10.10">
    <property type="match status" value="1"/>
</dbReference>
<dbReference type="HAMAP" id="MF_00317">
    <property type="entry name" value="DNApol_clamp_arch"/>
    <property type="match status" value="1"/>
</dbReference>
<dbReference type="InterPro" id="IPR046938">
    <property type="entry name" value="DNA_clamp_sf"/>
</dbReference>
<dbReference type="InterPro" id="IPR000730">
    <property type="entry name" value="Pr_cel_nuc_antig"/>
</dbReference>
<dbReference type="InterPro" id="IPR022649">
    <property type="entry name" value="Pr_cel_nuc_antig_C"/>
</dbReference>
<dbReference type="InterPro" id="IPR022659">
    <property type="entry name" value="Pr_cel_nuc_antig_CS"/>
</dbReference>
<dbReference type="InterPro" id="IPR022648">
    <property type="entry name" value="Pr_cel_nuc_antig_N"/>
</dbReference>
<dbReference type="NCBIfam" id="TIGR00590">
    <property type="entry name" value="pcna"/>
    <property type="match status" value="1"/>
</dbReference>
<dbReference type="PANTHER" id="PTHR11352">
    <property type="entry name" value="PROLIFERATING CELL NUCLEAR ANTIGEN"/>
    <property type="match status" value="1"/>
</dbReference>
<dbReference type="PANTHER" id="PTHR11352:SF0">
    <property type="entry name" value="PROLIFERATING CELL NUCLEAR ANTIGEN"/>
    <property type="match status" value="1"/>
</dbReference>
<dbReference type="Pfam" id="PF02747">
    <property type="entry name" value="PCNA_C"/>
    <property type="match status" value="1"/>
</dbReference>
<dbReference type="Pfam" id="PF00705">
    <property type="entry name" value="PCNA_N"/>
    <property type="match status" value="1"/>
</dbReference>
<dbReference type="PRINTS" id="PR00339">
    <property type="entry name" value="PCNACYCLIN"/>
</dbReference>
<dbReference type="SUPFAM" id="SSF55979">
    <property type="entry name" value="DNA clamp"/>
    <property type="match status" value="2"/>
</dbReference>
<dbReference type="PROSITE" id="PS01251">
    <property type="entry name" value="PCNA_1"/>
    <property type="match status" value="1"/>
</dbReference>
<dbReference type="PROSITE" id="PS00293">
    <property type="entry name" value="PCNA_2"/>
    <property type="match status" value="1"/>
</dbReference>
<proteinExistence type="inferred from homology"/>
<protein>
    <recommendedName>
        <fullName>Proliferating cell nuclear antigen</fullName>
        <shortName>PCNA</shortName>
    </recommendedName>
    <alternativeName>
        <fullName>Cyclin</fullName>
    </alternativeName>
</protein>
<comment type="function">
    <text>This protein is an auxiliary protein of DNA polymerase delta and is involved in the control of eukaryotic DNA replication by increasing the polymerase's processibility during elongation of the leading strand.</text>
</comment>
<comment type="subcellular location">
    <subcellularLocation>
        <location>Nucleus</location>
    </subcellularLocation>
</comment>
<comment type="similarity">
    <text evidence="2">Belongs to the PCNA family.</text>
</comment>
<accession>Q00268</accession>
<reference key="1">
    <citation type="journal article" date="1992" name="Eur. J. Biochem.">
        <title>Identification of carrot cDNA clones encoding a second putative proliferating cell-nuclear antigen, DNA polymerase delta auxiliary protein.</title>
        <authorList>
            <person name="Hata S."/>
            <person name="Kouchi H."/>
            <person name="Tanaka Y."/>
            <person name="Minami E."/>
            <person name="Matsumoto T."/>
            <person name="Suzuka I."/>
            <person name="Hashimoto J."/>
        </authorList>
    </citation>
    <scope>NUCLEOTIDE SEQUENCE [GENOMIC DNA]</scope>
    <source>
        <strain>cv. Kurodagosun</strain>
    </source>
</reference>
<evidence type="ECO:0000255" key="1"/>
<evidence type="ECO:0000305" key="2"/>
<sequence>MLELRLVQGSLLKKVMDSIKDLVNDANFDCSATGFSLQAMDSSHVALVAVLLRSEGFEHYRCDRNISMGMNLGNMAKMLKCAGNDDIITIKADDGSDTVTFMFESPTQDKIADFEMKLMDIDSEHLGIPEAEYHAIVRMPSAEFARICKDLSSIGDTVVISVTKEGVKFSTRGDIGTANIVCRQNTTVDKPEEATVIEMNEPVSLTFALRYMNSFTKASPLSSTVTISLSSELPVVVEYKIAEMGYIRFYLAPKIEEEEDESKP</sequence>
<keyword id="KW-0235">DNA replication</keyword>
<keyword id="KW-0238">DNA-binding</keyword>
<keyword id="KW-0539">Nucleus</keyword>
<name>PCNA1_DAUCA</name>
<feature type="chain" id="PRO_0000149181" description="Proliferating cell nuclear antigen">
    <location>
        <begin position="1"/>
        <end position="264"/>
    </location>
</feature>
<feature type="DNA-binding region" evidence="1">
    <location>
        <begin position="61"/>
        <end position="80"/>
    </location>
</feature>
<feature type="sequence variant">
    <original>A</original>
    <variation>L</variation>
    <location>
        <position position="218"/>
    </location>
</feature>
<organism>
    <name type="scientific">Daucus carota</name>
    <name type="common">Wild carrot</name>
    <dbReference type="NCBI Taxonomy" id="4039"/>
    <lineage>
        <taxon>Eukaryota</taxon>
        <taxon>Viridiplantae</taxon>
        <taxon>Streptophyta</taxon>
        <taxon>Embryophyta</taxon>
        <taxon>Tracheophyta</taxon>
        <taxon>Spermatophyta</taxon>
        <taxon>Magnoliopsida</taxon>
        <taxon>eudicotyledons</taxon>
        <taxon>Gunneridae</taxon>
        <taxon>Pentapetalae</taxon>
        <taxon>asterids</taxon>
        <taxon>campanulids</taxon>
        <taxon>Apiales</taxon>
        <taxon>Apiaceae</taxon>
        <taxon>Apioideae</taxon>
        <taxon>Scandiceae</taxon>
        <taxon>Daucinae</taxon>
        <taxon>Daucus</taxon>
        <taxon>Daucus sect. Daucus</taxon>
    </lineage>
</organism>